<dbReference type="EMBL" id="BC065880">
    <property type="protein sequence ID" value="AAH65880.1"/>
    <property type="molecule type" value="mRNA"/>
</dbReference>
<dbReference type="RefSeq" id="NP_991221.1">
    <property type="nucleotide sequence ID" value="NM_205658.1"/>
</dbReference>
<dbReference type="SMR" id="Q6P011"/>
<dbReference type="FunCoup" id="Q6P011">
    <property type="interactions" value="2691"/>
</dbReference>
<dbReference type="STRING" id="7955.ENSDARP00000139558"/>
<dbReference type="PaxDb" id="7955-ENSDARP00000057377"/>
<dbReference type="GeneID" id="402956"/>
<dbReference type="KEGG" id="dre:402956"/>
<dbReference type="AGR" id="ZFIN:ZDB-GENE-040426-1891"/>
<dbReference type="CTD" id="51234"/>
<dbReference type="ZFIN" id="ZDB-GENE-040426-1891">
    <property type="gene designation" value="emc4"/>
</dbReference>
<dbReference type="eggNOG" id="KOG3318">
    <property type="taxonomic scope" value="Eukaryota"/>
</dbReference>
<dbReference type="InParanoid" id="Q6P011"/>
<dbReference type="OrthoDB" id="369569at2759"/>
<dbReference type="PhylomeDB" id="Q6P011"/>
<dbReference type="PRO" id="PR:Q6P011"/>
<dbReference type="Proteomes" id="UP000000437">
    <property type="component" value="Chromosome 7"/>
</dbReference>
<dbReference type="GO" id="GO:0072546">
    <property type="term" value="C:EMC complex"/>
    <property type="evidence" value="ECO:0000250"/>
    <property type="project" value="UniProtKB"/>
</dbReference>
<dbReference type="GO" id="GO:0005789">
    <property type="term" value="C:endoplasmic reticulum membrane"/>
    <property type="evidence" value="ECO:0000250"/>
    <property type="project" value="UniProtKB"/>
</dbReference>
<dbReference type="GO" id="GO:0016020">
    <property type="term" value="C:membrane"/>
    <property type="evidence" value="ECO:0000250"/>
    <property type="project" value="UniProtKB"/>
</dbReference>
<dbReference type="GO" id="GO:0045050">
    <property type="term" value="P:protein insertion into ER membrane by stop-transfer membrane-anchor sequence"/>
    <property type="evidence" value="ECO:0000250"/>
    <property type="project" value="UniProtKB"/>
</dbReference>
<dbReference type="GO" id="GO:0071816">
    <property type="term" value="P:tail-anchored membrane protein insertion into ER membrane"/>
    <property type="evidence" value="ECO:0000250"/>
    <property type="project" value="UniProtKB"/>
</dbReference>
<dbReference type="InterPro" id="IPR009445">
    <property type="entry name" value="TMEM85/Emc4"/>
</dbReference>
<dbReference type="PANTHER" id="PTHR19315">
    <property type="entry name" value="ER MEMBRANE PROTEIN COMPLEX SUBUNIT 4"/>
    <property type="match status" value="1"/>
</dbReference>
<dbReference type="Pfam" id="PF06417">
    <property type="entry name" value="EMC4"/>
    <property type="match status" value="1"/>
</dbReference>
<dbReference type="PIRSF" id="PIRSF017207">
    <property type="entry name" value="UCP017207_TM-p85"/>
    <property type="match status" value="1"/>
</dbReference>
<gene>
    <name type="primary">emc4</name>
    <name type="synonym">tmem85</name>
    <name type="ORF">zgc:77852</name>
</gene>
<organism>
    <name type="scientific">Danio rerio</name>
    <name type="common">Zebrafish</name>
    <name type="synonym">Brachydanio rerio</name>
    <dbReference type="NCBI Taxonomy" id="7955"/>
    <lineage>
        <taxon>Eukaryota</taxon>
        <taxon>Metazoa</taxon>
        <taxon>Chordata</taxon>
        <taxon>Craniata</taxon>
        <taxon>Vertebrata</taxon>
        <taxon>Euteleostomi</taxon>
        <taxon>Actinopterygii</taxon>
        <taxon>Neopterygii</taxon>
        <taxon>Teleostei</taxon>
        <taxon>Ostariophysi</taxon>
        <taxon>Cypriniformes</taxon>
        <taxon>Danionidae</taxon>
        <taxon>Danioninae</taxon>
        <taxon>Danio</taxon>
    </lineage>
</organism>
<protein>
    <recommendedName>
        <fullName>ER membrane protein complex subunit 4</fullName>
    </recommendedName>
    <alternativeName>
        <fullName>Transmembrane protein 85</fullName>
    </alternativeName>
</protein>
<feature type="chain" id="PRO_0000375879" description="ER membrane protein complex subunit 4">
    <location>
        <begin position="1"/>
        <end position="189"/>
    </location>
</feature>
<feature type="topological domain" description="Cytoplasmic" evidence="1">
    <location>
        <begin position="1"/>
        <end position="72"/>
    </location>
</feature>
<feature type="transmembrane region" description="Helical" evidence="1">
    <location>
        <begin position="73"/>
        <end position="93"/>
    </location>
</feature>
<feature type="topological domain" description="Lumenal" evidence="1">
    <location>
        <begin position="94"/>
        <end position="104"/>
    </location>
</feature>
<feature type="transmembrane region" description="Helical" evidence="1">
    <location>
        <begin position="105"/>
        <end position="126"/>
    </location>
</feature>
<feature type="topological domain" description="Cytoplasmic" evidence="1">
    <location>
        <begin position="127"/>
        <end position="133"/>
    </location>
</feature>
<feature type="transmembrane region" description="Helical" evidence="1">
    <location>
        <begin position="134"/>
        <end position="154"/>
    </location>
</feature>
<feature type="topological domain" description="Lumenal" evidence="1">
    <location>
        <begin position="155"/>
        <end position="189"/>
    </location>
</feature>
<feature type="region of interest" description="Disordered" evidence="2">
    <location>
        <begin position="1"/>
        <end position="20"/>
    </location>
</feature>
<feature type="region of interest" description="Disordered" evidence="2">
    <location>
        <begin position="30"/>
        <end position="63"/>
    </location>
</feature>
<feature type="compositionally biased region" description="Gly residues" evidence="2">
    <location>
        <begin position="1"/>
        <end position="11"/>
    </location>
</feature>
<feature type="compositionally biased region" description="Basic and acidic residues" evidence="2">
    <location>
        <begin position="36"/>
        <end position="46"/>
    </location>
</feature>
<proteinExistence type="evidence at transcript level"/>
<evidence type="ECO:0000250" key="1">
    <source>
        <dbReference type="UniProtKB" id="Q5J8M3"/>
    </source>
</evidence>
<evidence type="ECO:0000256" key="2">
    <source>
        <dbReference type="SAM" id="MobiDB-lite"/>
    </source>
</evidence>
<evidence type="ECO:0000305" key="3"/>
<accession>Q6P011</accession>
<reference key="1">
    <citation type="submission" date="2004-01" db="EMBL/GenBank/DDBJ databases">
        <authorList>
            <consortium name="NIH - Zebrafish Gene Collection (ZGC) project"/>
        </authorList>
    </citation>
    <scope>NUCLEOTIDE SEQUENCE [LARGE SCALE MRNA]</scope>
</reference>
<name>EMC4_DANRE</name>
<keyword id="KW-0256">Endoplasmic reticulum</keyword>
<keyword id="KW-0472">Membrane</keyword>
<keyword id="KW-1185">Reference proteome</keyword>
<keyword id="KW-0812">Transmembrane</keyword>
<keyword id="KW-1133">Transmembrane helix</keyword>
<comment type="function">
    <text evidence="1">Part of the endoplasmic reticulum membrane protein complex (EMC) that enables the energy-independent insertion into endoplasmic reticulum membranes of newly synthesized membrane proteins. Preferentially accommodates proteins with transmembrane domains that are weakly hydrophobic or contain destabilizing features such as charged and aromatic residues. Involved in the cotranslational insertion of multi-pass membrane proteins in which stop-transfer membrane-anchor sequences become ER membrane spanning helices. It is also required for the post-translational insertion of tail-anchored/TA proteins in endoplasmic reticulum membranes. By mediating the proper cotranslational insertion of N-terminal transmembrane domains in an N-exo topology, with translocated N-terminus in the lumen of the ER, controls the topology of multi-pass membrane proteins like the G protein-coupled receptors. By regulating the insertion of various proteins in membranes, it is indirectly involved in many cellular processes.</text>
</comment>
<comment type="subunit">
    <text evidence="1">Component of the ER membrane protein complex (EMC).</text>
</comment>
<comment type="subcellular location">
    <subcellularLocation>
        <location evidence="1">Endoplasmic reticulum membrane</location>
        <topology evidence="1">Multi-pass membrane protein</topology>
    </subcellularLocation>
</comment>
<comment type="similarity">
    <text evidence="3">Belongs to the EMC4 family.</text>
</comment>
<sequence length="189" mass="20692">MTSSAGQGGGALSTRGGAATKRMKWAVELSLGNSRSRSDRQGKDGDVMYPVGYSDKPVPDTSVQEADRNLVEKRCWDVALGPLKQIPMNLFIMYMSGNTISIFPIMMVCMMAWRPIQALMSMSATFKLLESSSQQWLQGLVYLIGNLLGSALAIYKCQSMGLLPTHSSDWLAFIEPPQRLEIMGGGMVM</sequence>